<feature type="chain" id="PRO_0000403119" description="tRNA(Met) cytidine acetyltransferase TmcA">
    <location>
        <begin position="1"/>
        <end position="699"/>
    </location>
</feature>
<feature type="domain" description="N-acetyltransferase" evidence="1">
    <location>
        <begin position="408"/>
        <end position="547"/>
    </location>
</feature>
<feature type="binding site" evidence="1">
    <location>
        <position position="178"/>
    </location>
    <ligand>
        <name>ATP</name>
        <dbReference type="ChEBI" id="CHEBI:30616"/>
    </ligand>
</feature>
<feature type="binding site" evidence="1">
    <location>
        <begin position="200"/>
        <end position="209"/>
    </location>
    <ligand>
        <name>ATP</name>
        <dbReference type="ChEBI" id="CHEBI:30616"/>
    </ligand>
</feature>
<feature type="binding site" evidence="1">
    <location>
        <position position="322"/>
    </location>
    <ligand>
        <name>ATP</name>
        <dbReference type="ChEBI" id="CHEBI:30616"/>
    </ligand>
</feature>
<feature type="binding site" evidence="1">
    <location>
        <begin position="475"/>
        <end position="477"/>
    </location>
    <ligand>
        <name>acetyl-CoA</name>
        <dbReference type="ChEBI" id="CHEBI:57288"/>
    </ligand>
</feature>
<feature type="binding site" evidence="1">
    <location>
        <begin position="482"/>
        <end position="488"/>
    </location>
    <ligand>
        <name>acetyl-CoA</name>
        <dbReference type="ChEBI" id="CHEBI:57288"/>
    </ligand>
</feature>
<evidence type="ECO:0000255" key="1">
    <source>
        <dbReference type="HAMAP-Rule" id="MF_01886"/>
    </source>
</evidence>
<protein>
    <recommendedName>
        <fullName evidence="1">tRNA(Met) cytidine acetyltransferase TmcA</fullName>
        <ecNumber evidence="1">2.3.1.193</ecNumber>
    </recommendedName>
</protein>
<reference key="1">
    <citation type="journal article" date="2004" name="Proc. Natl. Acad. Sci. U.S.A.">
        <title>Genome sequence of the enterobacterial phytopathogen Erwinia carotovora subsp. atroseptica and characterization of virulence factors.</title>
        <authorList>
            <person name="Bell K.S."/>
            <person name="Sebaihia M."/>
            <person name="Pritchard L."/>
            <person name="Holden M.T.G."/>
            <person name="Hyman L.J."/>
            <person name="Holeva M.C."/>
            <person name="Thomson N.R."/>
            <person name="Bentley S.D."/>
            <person name="Churcher L.J.C."/>
            <person name="Mungall K."/>
            <person name="Atkin R."/>
            <person name="Bason N."/>
            <person name="Brooks K."/>
            <person name="Chillingworth T."/>
            <person name="Clark K."/>
            <person name="Doggett J."/>
            <person name="Fraser A."/>
            <person name="Hance Z."/>
            <person name="Hauser H."/>
            <person name="Jagels K."/>
            <person name="Moule S."/>
            <person name="Norbertczak H."/>
            <person name="Ormond D."/>
            <person name="Price C."/>
            <person name="Quail M.A."/>
            <person name="Sanders M."/>
            <person name="Walker D."/>
            <person name="Whitehead S."/>
            <person name="Salmond G.P.C."/>
            <person name="Birch P.R.J."/>
            <person name="Parkhill J."/>
            <person name="Toth I.K."/>
        </authorList>
    </citation>
    <scope>NUCLEOTIDE SEQUENCE [LARGE SCALE GENOMIC DNA]</scope>
    <source>
        <strain>SCRI 1043 / ATCC BAA-672</strain>
    </source>
</reference>
<accession>Q6D7Q9</accession>
<proteinExistence type="inferred from homology"/>
<dbReference type="EC" id="2.3.1.193" evidence="1"/>
<dbReference type="EMBL" id="BX950851">
    <property type="protein sequence ID" value="CAG74176.1"/>
    <property type="molecule type" value="Genomic_DNA"/>
</dbReference>
<dbReference type="SMR" id="Q6D7Q9"/>
<dbReference type="STRING" id="218491.ECA1266"/>
<dbReference type="KEGG" id="eca:ECA1266"/>
<dbReference type="eggNOG" id="COG1444">
    <property type="taxonomic scope" value="Bacteria"/>
</dbReference>
<dbReference type="HOGENOM" id="CLU_004652_1_1_6"/>
<dbReference type="Proteomes" id="UP000007966">
    <property type="component" value="Chromosome"/>
</dbReference>
<dbReference type="GO" id="GO:0005737">
    <property type="term" value="C:cytoplasm"/>
    <property type="evidence" value="ECO:0007669"/>
    <property type="project" value="UniProtKB-SubCell"/>
</dbReference>
<dbReference type="GO" id="GO:1990883">
    <property type="term" value="F:18S rRNA cytidine N-acetyltransferase activity"/>
    <property type="evidence" value="ECO:0007669"/>
    <property type="project" value="TreeGrafter"/>
</dbReference>
<dbReference type="GO" id="GO:0005524">
    <property type="term" value="F:ATP binding"/>
    <property type="evidence" value="ECO:0007669"/>
    <property type="project" value="UniProtKB-UniRule"/>
</dbReference>
<dbReference type="GO" id="GO:0000049">
    <property type="term" value="F:tRNA binding"/>
    <property type="evidence" value="ECO:0007669"/>
    <property type="project" value="UniProtKB-UniRule"/>
</dbReference>
<dbReference type="GO" id="GO:0051392">
    <property type="term" value="F:tRNA N4-acetyltransferase activity"/>
    <property type="evidence" value="ECO:0007669"/>
    <property type="project" value="UniProtKB-UniRule"/>
</dbReference>
<dbReference type="GO" id="GO:1904812">
    <property type="term" value="P:rRNA acetylation involved in maturation of SSU-rRNA"/>
    <property type="evidence" value="ECO:0007669"/>
    <property type="project" value="TreeGrafter"/>
</dbReference>
<dbReference type="GO" id="GO:0051391">
    <property type="term" value="P:tRNA acetylation"/>
    <property type="evidence" value="ECO:0007669"/>
    <property type="project" value="UniProtKB-UniRule"/>
</dbReference>
<dbReference type="GO" id="GO:0002101">
    <property type="term" value="P:tRNA wobble cytosine modification"/>
    <property type="evidence" value="ECO:0007669"/>
    <property type="project" value="UniProtKB-UniRule"/>
</dbReference>
<dbReference type="FunFam" id="3.40.50.11040:FF:000003">
    <property type="entry name" value="tRNA(Met) cytidine acetyltransferase TmcA"/>
    <property type="match status" value="1"/>
</dbReference>
<dbReference type="FunFam" id="3.40.50.300:FF:001011">
    <property type="entry name" value="tRNA(Met) cytidine acetyltransferase TmcA"/>
    <property type="match status" value="1"/>
</dbReference>
<dbReference type="Gene3D" id="3.40.50.11040">
    <property type="match status" value="1"/>
</dbReference>
<dbReference type="Gene3D" id="3.40.630.30">
    <property type="match status" value="1"/>
</dbReference>
<dbReference type="Gene3D" id="3.40.50.300">
    <property type="entry name" value="P-loop containing nucleotide triphosphate hydrolases"/>
    <property type="match status" value="1"/>
</dbReference>
<dbReference type="Gene3D" id="1.20.120.890">
    <property type="entry name" value="tRNA(Met) cytidine acetyltransferase, tail domain"/>
    <property type="match status" value="1"/>
</dbReference>
<dbReference type="HAMAP" id="MF_01886">
    <property type="entry name" value="tRNA_acetyltr_TmcA"/>
    <property type="match status" value="1"/>
</dbReference>
<dbReference type="InterPro" id="IPR016181">
    <property type="entry name" value="Acyl_CoA_acyltransferase"/>
</dbReference>
<dbReference type="InterPro" id="IPR000182">
    <property type="entry name" value="GNAT_dom"/>
</dbReference>
<dbReference type="InterPro" id="IPR007807">
    <property type="entry name" value="NAT10/TcmA_helicase"/>
</dbReference>
<dbReference type="InterPro" id="IPR027417">
    <property type="entry name" value="P-loop_NTPase"/>
</dbReference>
<dbReference type="InterPro" id="IPR032672">
    <property type="entry name" value="TmcA/NAT10/Kre33"/>
</dbReference>
<dbReference type="InterPro" id="IPR038321">
    <property type="entry name" value="TmcA_C_sf"/>
</dbReference>
<dbReference type="InterPro" id="IPR013562">
    <property type="entry name" value="TmcA_N"/>
</dbReference>
<dbReference type="InterPro" id="IPR033442">
    <property type="entry name" value="TmcA_tRNA_bind"/>
</dbReference>
<dbReference type="InterPro" id="IPR024914">
    <property type="entry name" value="tRNA_acetyltr_TmcA"/>
</dbReference>
<dbReference type="PANTHER" id="PTHR10925">
    <property type="entry name" value="N-ACETYLTRANSFERASE 10"/>
    <property type="match status" value="1"/>
</dbReference>
<dbReference type="PANTHER" id="PTHR10925:SF5">
    <property type="entry name" value="RNA CYTIDINE ACETYLTRANSFERASE"/>
    <property type="match status" value="1"/>
</dbReference>
<dbReference type="Pfam" id="PF13718">
    <property type="entry name" value="GNAT_acetyltr_2"/>
    <property type="match status" value="2"/>
</dbReference>
<dbReference type="Pfam" id="PF05127">
    <property type="entry name" value="NAT10_TcmA_helicase"/>
    <property type="match status" value="1"/>
</dbReference>
<dbReference type="Pfam" id="PF08351">
    <property type="entry name" value="TmcA_N"/>
    <property type="match status" value="1"/>
</dbReference>
<dbReference type="Pfam" id="PF17176">
    <property type="entry name" value="tRNA_bind_3"/>
    <property type="match status" value="1"/>
</dbReference>
<dbReference type="SUPFAM" id="SSF55729">
    <property type="entry name" value="Acyl-CoA N-acyltransferases (Nat)"/>
    <property type="match status" value="2"/>
</dbReference>
<dbReference type="SUPFAM" id="SSF52540">
    <property type="entry name" value="P-loop containing nucleoside triphosphate hydrolases"/>
    <property type="match status" value="1"/>
</dbReference>
<dbReference type="PROSITE" id="PS51186">
    <property type="entry name" value="GNAT"/>
    <property type="match status" value="1"/>
</dbReference>
<comment type="function">
    <text evidence="1">Catalyzes the formation of N(4)-acetylcytidine (ac(4)C) at the wobble position of tRNA(Met), by using acetyl-CoA as an acetyl donor and ATP (or GTP).</text>
</comment>
<comment type="catalytic activity">
    <reaction evidence="1">
        <text>cytidine(34) in elongator tRNA(Met) + acetyl-CoA + ATP + H2O = N(4)-acetylcytidine(34) in elongator tRNA(Met) + ADP + phosphate + CoA + H(+)</text>
        <dbReference type="Rhea" id="RHEA:43788"/>
        <dbReference type="Rhea" id="RHEA-COMP:10693"/>
        <dbReference type="Rhea" id="RHEA-COMP:10694"/>
        <dbReference type="ChEBI" id="CHEBI:15377"/>
        <dbReference type="ChEBI" id="CHEBI:15378"/>
        <dbReference type="ChEBI" id="CHEBI:30616"/>
        <dbReference type="ChEBI" id="CHEBI:43474"/>
        <dbReference type="ChEBI" id="CHEBI:57287"/>
        <dbReference type="ChEBI" id="CHEBI:57288"/>
        <dbReference type="ChEBI" id="CHEBI:74900"/>
        <dbReference type="ChEBI" id="CHEBI:82748"/>
        <dbReference type="ChEBI" id="CHEBI:456216"/>
        <dbReference type="EC" id="2.3.1.193"/>
    </reaction>
</comment>
<comment type="subcellular location">
    <subcellularLocation>
        <location evidence="1">Cytoplasm</location>
    </subcellularLocation>
</comment>
<comment type="similarity">
    <text evidence="1">Belongs to the RNA cytidine acetyltransferase family. TmcA subfamily.</text>
</comment>
<keyword id="KW-0012">Acyltransferase</keyword>
<keyword id="KW-0067">ATP-binding</keyword>
<keyword id="KW-0963">Cytoplasm</keyword>
<keyword id="KW-0547">Nucleotide-binding</keyword>
<keyword id="KW-1185">Reference proteome</keyword>
<keyword id="KW-0694">RNA-binding</keyword>
<keyword id="KW-0808">Transferase</keyword>
<keyword id="KW-0819">tRNA processing</keyword>
<keyword id="KW-0820">tRNA-binding</keyword>
<name>TMCA_PECAS</name>
<gene>
    <name evidence="1" type="primary">tmcA</name>
    <name type="ordered locus">ECA1266</name>
</gene>
<sequence length="699" mass="77842">MRDFLHSQQQQQRYGIRRLLVLSGESSWCEEQAMVLSSQSAGDWLWVSEHAPDSVASLPASRVRTLLGREFHHAVFDARSGVDVEALAMLSGTLRAGSWLIMLVPSWQVWSTLPDEDSLRWSEHAQPIATPHFIQHFQRQLLADDDVVLWQQGQPLVIQPLAVRSDWQPAQGEPTARQQQILHELSAAESGVFVITAPRGRGKSTLAGMLTQRSRGTCWITAPSRSATDILQQYARSDAPFWAPDALLAYCRLHGAPDVDWLLIDEVAAIPSSVLTALLPYFPRILMTTTVQGYEGTGRGFLLKFCAALPQCRVFSLDDPLRWAANDPLERVLDQALLFNEPASLHFPLNPTDGALTLPSAKLDIRTECADDWLTHPERLTWCYALLCSAHYRTSPLDLRRLMDAPGMHIASAQVAGDIRGVLWLVEEGGLSDSLAHDVWAGRRRPRGNLVAQSLAAHAGLWNAPTLRARRVSRIAVASSSRRQGIGRALIADQTREAQKQALDYLSVSFGYQPDLWAFWQSCGFQLVRIGSHLEASSGCYSAMAILPLSEAGYELAQQGSQQLARDWYWLQRMIPLNLALPQTENIERDTESIALNDDDWRELAGFAFAHRPMEASFAAICRLLIHTSLPLPALRLLAETPSEGEQTAATLGLTGKKALLKRWREETTSALIELDAQRGERWRLWVLPDDAAEDALHP</sequence>
<organism>
    <name type="scientific">Pectobacterium atrosepticum (strain SCRI 1043 / ATCC BAA-672)</name>
    <name type="common">Erwinia carotovora subsp. atroseptica</name>
    <dbReference type="NCBI Taxonomy" id="218491"/>
    <lineage>
        <taxon>Bacteria</taxon>
        <taxon>Pseudomonadati</taxon>
        <taxon>Pseudomonadota</taxon>
        <taxon>Gammaproteobacteria</taxon>
        <taxon>Enterobacterales</taxon>
        <taxon>Pectobacteriaceae</taxon>
        <taxon>Pectobacterium</taxon>
    </lineage>
</organism>